<evidence type="ECO:0000305" key="1"/>
<evidence type="ECO:0000305" key="2">
    <source>
    </source>
</evidence>
<accession>Q8TGM1</accession>
<name>YL399_YEAST</name>
<gene>
    <name type="ordered locus">YLR399W-A</name>
</gene>
<protein>
    <recommendedName>
        <fullName>Putative uncharacterized protein YLR399W-A</fullName>
    </recommendedName>
</protein>
<reference key="1">
    <citation type="journal article" date="1997" name="Nature">
        <title>The nucleotide sequence of Saccharomyces cerevisiae chromosome XII.</title>
        <authorList>
            <person name="Johnston M."/>
            <person name="Hillier L.W."/>
            <person name="Riles L."/>
            <person name="Albermann K."/>
            <person name="Andre B."/>
            <person name="Ansorge W."/>
            <person name="Benes V."/>
            <person name="Brueckner M."/>
            <person name="Delius H."/>
            <person name="Dubois E."/>
            <person name="Duesterhoeft A."/>
            <person name="Entian K.-D."/>
            <person name="Floeth M."/>
            <person name="Goffeau A."/>
            <person name="Hebling U."/>
            <person name="Heumann K."/>
            <person name="Heuss-Neitzel D."/>
            <person name="Hilbert H."/>
            <person name="Hilger F."/>
            <person name="Kleine K."/>
            <person name="Koetter P."/>
            <person name="Louis E.J."/>
            <person name="Messenguy F."/>
            <person name="Mewes H.-W."/>
            <person name="Miosga T."/>
            <person name="Moestl D."/>
            <person name="Mueller-Auer S."/>
            <person name="Nentwich U."/>
            <person name="Obermaier B."/>
            <person name="Piravandi E."/>
            <person name="Pohl T.M."/>
            <person name="Portetelle D."/>
            <person name="Purnelle B."/>
            <person name="Rechmann S."/>
            <person name="Rieger M."/>
            <person name="Rinke M."/>
            <person name="Rose M."/>
            <person name="Scharfe M."/>
            <person name="Scherens B."/>
            <person name="Scholler P."/>
            <person name="Schwager C."/>
            <person name="Schwarz S."/>
            <person name="Underwood A.P."/>
            <person name="Urrestarazu L.A."/>
            <person name="Vandenbol M."/>
            <person name="Verhasselt P."/>
            <person name="Vierendeels F."/>
            <person name="Voet M."/>
            <person name="Volckaert G."/>
            <person name="Voss H."/>
            <person name="Wambutt R."/>
            <person name="Wedler E."/>
            <person name="Wedler H."/>
            <person name="Zimmermann F.K."/>
            <person name="Zollner A."/>
            <person name="Hani J."/>
            <person name="Hoheisel J.D."/>
        </authorList>
    </citation>
    <scope>NUCLEOTIDE SEQUENCE [LARGE SCALE GENOMIC DNA]</scope>
    <source>
        <strain>ATCC 204508 / S288c</strain>
    </source>
</reference>
<reference key="2">
    <citation type="journal article" date="2014" name="G3 (Bethesda)">
        <title>The reference genome sequence of Saccharomyces cerevisiae: Then and now.</title>
        <authorList>
            <person name="Engel S.R."/>
            <person name="Dietrich F.S."/>
            <person name="Fisk D.G."/>
            <person name="Binkley G."/>
            <person name="Balakrishnan R."/>
            <person name="Costanzo M.C."/>
            <person name="Dwight S.S."/>
            <person name="Hitz B.C."/>
            <person name="Karra K."/>
            <person name="Nash R.S."/>
            <person name="Weng S."/>
            <person name="Wong E.D."/>
            <person name="Lloyd P."/>
            <person name="Skrzypek M.S."/>
            <person name="Miyasato S.R."/>
            <person name="Simison M."/>
            <person name="Cherry J.M."/>
        </authorList>
    </citation>
    <scope>GENOME REANNOTATION</scope>
    <source>
        <strain>ATCC 204508 / S288c</strain>
    </source>
</reference>
<reference key="3">
    <citation type="journal article" date="2002" name="Nat. Biotechnol.">
        <title>An integrated approach for finding overlooked genes in yeast.</title>
        <authorList>
            <person name="Kumar A."/>
            <person name="Harrison P.M."/>
            <person name="Cheung K.-H."/>
            <person name="Lan N."/>
            <person name="Echols N."/>
            <person name="Bertone P."/>
            <person name="Miller P."/>
            <person name="Gerstein M.B."/>
            <person name="Snyder M."/>
        </authorList>
    </citation>
    <scope>NUCLEOTIDE SEQUENCE [GENOMIC DNA]</scope>
</reference>
<feature type="chain" id="PRO_0000299752" description="Putative uncharacterized protein YLR399W-A">
    <location>
        <begin position="1"/>
        <end position="34"/>
    </location>
</feature>
<comment type="miscellaneous">
    <text evidence="1">Completely overlaps BDF1.</text>
</comment>
<comment type="caution">
    <text evidence="2">Product of a dubious gene prediction unlikely to encode a functional protein. Because of that it is not part of the S.cerevisiae S288c complete/reference proteome set.</text>
</comment>
<proteinExistence type="uncertain"/>
<dbReference type="EMBL" id="U19729">
    <property type="status" value="NOT_ANNOTATED_CDS"/>
    <property type="molecule type" value="Genomic_DNA"/>
</dbReference>
<dbReference type="EMBL" id="AF479969">
    <property type="protein sequence ID" value="AAL79282.1"/>
    <property type="molecule type" value="Genomic_DNA"/>
</dbReference>
<dbReference type="STRING" id="4932.YLR399W-A"/>
<dbReference type="PaxDb" id="4932-YLR399W-A"/>
<dbReference type="EnsemblFungi" id="YLR399W-A_mRNA">
    <property type="protein sequence ID" value="YLR399W-A"/>
    <property type="gene ID" value="YLR399W-A"/>
</dbReference>
<dbReference type="AGR" id="SGD:S000028682"/>
<dbReference type="SGD" id="S000028682">
    <property type="gene designation" value="YLR399W-A"/>
</dbReference>
<dbReference type="HOGENOM" id="CLU_3377401_0_0_1"/>
<sequence>MFLAICDMPAFGPLNLILLLTMRLKSSVICSGTS</sequence>
<organism>
    <name type="scientific">Saccharomyces cerevisiae (strain ATCC 204508 / S288c)</name>
    <name type="common">Baker's yeast</name>
    <dbReference type="NCBI Taxonomy" id="559292"/>
    <lineage>
        <taxon>Eukaryota</taxon>
        <taxon>Fungi</taxon>
        <taxon>Dikarya</taxon>
        <taxon>Ascomycota</taxon>
        <taxon>Saccharomycotina</taxon>
        <taxon>Saccharomycetes</taxon>
        <taxon>Saccharomycetales</taxon>
        <taxon>Saccharomycetaceae</taxon>
        <taxon>Saccharomyces</taxon>
    </lineage>
</organism>